<gene>
    <name type="ORF">SPAC13G6.08</name>
</gene>
<evidence type="ECO:0000305" key="1"/>
<feature type="chain" id="PRO_0000051488" description="Uncharacterized WD repeat-containing protein C13G6.08">
    <location>
        <begin position="1"/>
        <end position="535"/>
    </location>
</feature>
<feature type="repeat" description="WD 1">
    <location>
        <begin position="189"/>
        <end position="226"/>
    </location>
</feature>
<feature type="repeat" description="WD 2">
    <location>
        <begin position="228"/>
        <end position="267"/>
    </location>
</feature>
<feature type="repeat" description="WD 3">
    <location>
        <begin position="269"/>
        <end position="314"/>
    </location>
</feature>
<feature type="repeat" description="WD 4">
    <location>
        <begin position="320"/>
        <end position="359"/>
    </location>
</feature>
<feature type="repeat" description="WD 5">
    <location>
        <begin position="362"/>
        <end position="404"/>
    </location>
</feature>
<feature type="repeat" description="WD 6">
    <location>
        <begin position="462"/>
        <end position="505"/>
    </location>
</feature>
<dbReference type="EMBL" id="CU329670">
    <property type="protein sequence ID" value="CAA91101.1"/>
    <property type="molecule type" value="Genomic_DNA"/>
</dbReference>
<dbReference type="PIR" id="S62437">
    <property type="entry name" value="S62437"/>
</dbReference>
<dbReference type="SMR" id="Q09786"/>
<dbReference type="BioGRID" id="279286">
    <property type="interactions" value="15"/>
</dbReference>
<dbReference type="FunCoup" id="Q09786">
    <property type="interactions" value="8"/>
</dbReference>
<dbReference type="STRING" id="284812.Q09786"/>
<dbReference type="PaxDb" id="4896-SPAC13G6.08.1"/>
<dbReference type="EnsemblFungi" id="SPAC13G6.08.1">
    <property type="protein sequence ID" value="SPAC13G6.08.1:pep"/>
    <property type="gene ID" value="SPAC13G6.08"/>
</dbReference>
<dbReference type="KEGG" id="spo:2542840"/>
<dbReference type="PomBase" id="SPAC13G6.08"/>
<dbReference type="VEuPathDB" id="FungiDB:SPAC13G6.08"/>
<dbReference type="eggNOG" id="KOG0305">
    <property type="taxonomic scope" value="Eukaryota"/>
</dbReference>
<dbReference type="HOGENOM" id="CLU_014831_3_3_1"/>
<dbReference type="InParanoid" id="Q09786"/>
<dbReference type="OMA" id="RDDFYTT"/>
<dbReference type="PhylomeDB" id="Q09786"/>
<dbReference type="PRO" id="PR:Q09786"/>
<dbReference type="Proteomes" id="UP000002485">
    <property type="component" value="Chromosome I"/>
</dbReference>
<dbReference type="GO" id="GO:0010997">
    <property type="term" value="F:anaphase-promoting complex binding"/>
    <property type="evidence" value="ECO:0007669"/>
    <property type="project" value="InterPro"/>
</dbReference>
<dbReference type="GO" id="GO:1990757">
    <property type="term" value="F:ubiquitin ligase activator activity"/>
    <property type="evidence" value="ECO:0000314"/>
    <property type="project" value="PomBase"/>
</dbReference>
<dbReference type="GO" id="GO:0031145">
    <property type="term" value="P:anaphase-promoting complex-dependent catabolic process"/>
    <property type="evidence" value="ECO:0000314"/>
    <property type="project" value="PomBase"/>
</dbReference>
<dbReference type="GO" id="GO:1905786">
    <property type="term" value="P:positive regulation of anaphase-promoting complex-dependent catabolic process"/>
    <property type="evidence" value="ECO:0000318"/>
    <property type="project" value="GO_Central"/>
</dbReference>
<dbReference type="Gene3D" id="2.130.10.10">
    <property type="entry name" value="YVTN repeat-like/Quinoprotein amine dehydrogenase"/>
    <property type="match status" value="1"/>
</dbReference>
<dbReference type="InterPro" id="IPR033010">
    <property type="entry name" value="Cdc20/Fizzy"/>
</dbReference>
<dbReference type="InterPro" id="IPR015943">
    <property type="entry name" value="WD40/YVTN_repeat-like_dom_sf"/>
</dbReference>
<dbReference type="InterPro" id="IPR056150">
    <property type="entry name" value="WD40_CDC20-Fz"/>
</dbReference>
<dbReference type="InterPro" id="IPR036322">
    <property type="entry name" value="WD40_repeat_dom_sf"/>
</dbReference>
<dbReference type="InterPro" id="IPR001680">
    <property type="entry name" value="WD40_rpt"/>
</dbReference>
<dbReference type="PANTHER" id="PTHR19918:SF66">
    <property type="entry name" value="CDC20_FIZZY FAMILY WD REPEAT PROTEIN"/>
    <property type="match status" value="1"/>
</dbReference>
<dbReference type="PANTHER" id="PTHR19918">
    <property type="entry name" value="CELL DIVISION CYCLE 20 CDC20 FIZZY -RELATED"/>
    <property type="match status" value="1"/>
</dbReference>
<dbReference type="Pfam" id="PF24807">
    <property type="entry name" value="WD40_CDC20-Fz"/>
    <property type="match status" value="1"/>
</dbReference>
<dbReference type="SMART" id="SM00320">
    <property type="entry name" value="WD40"/>
    <property type="match status" value="4"/>
</dbReference>
<dbReference type="SUPFAM" id="SSF50978">
    <property type="entry name" value="WD40 repeat-like"/>
    <property type="match status" value="1"/>
</dbReference>
<dbReference type="PROSITE" id="PS50082">
    <property type="entry name" value="WD_REPEATS_2"/>
    <property type="match status" value="2"/>
</dbReference>
<dbReference type="PROSITE" id="PS50294">
    <property type="entry name" value="WD_REPEATS_REGION"/>
    <property type="match status" value="1"/>
</dbReference>
<organism>
    <name type="scientific">Schizosaccharomyces pombe (strain 972 / ATCC 24843)</name>
    <name type="common">Fission yeast</name>
    <dbReference type="NCBI Taxonomy" id="284812"/>
    <lineage>
        <taxon>Eukaryota</taxon>
        <taxon>Fungi</taxon>
        <taxon>Dikarya</taxon>
        <taxon>Ascomycota</taxon>
        <taxon>Taphrinomycotina</taxon>
        <taxon>Schizosaccharomycetes</taxon>
        <taxon>Schizosaccharomycetales</taxon>
        <taxon>Schizosaccharomycetaceae</taxon>
        <taxon>Schizosaccharomyces</taxon>
    </lineage>
</organism>
<proteinExistence type="inferred from homology"/>
<comment type="similarity">
    <text evidence="1">Belongs to the WD repeat CDC20/Fizzy family.</text>
</comment>
<keyword id="KW-1185">Reference proteome</keyword>
<keyword id="KW-0677">Repeat</keyword>
<keyword id="KW-0853">WD repeat</keyword>
<reference key="1">
    <citation type="journal article" date="2002" name="Nature">
        <title>The genome sequence of Schizosaccharomyces pombe.</title>
        <authorList>
            <person name="Wood V."/>
            <person name="Gwilliam R."/>
            <person name="Rajandream M.A."/>
            <person name="Lyne M.H."/>
            <person name="Lyne R."/>
            <person name="Stewart A."/>
            <person name="Sgouros J.G."/>
            <person name="Peat N."/>
            <person name="Hayles J."/>
            <person name="Baker S.G."/>
            <person name="Basham D."/>
            <person name="Bowman S."/>
            <person name="Brooks K."/>
            <person name="Brown D."/>
            <person name="Brown S."/>
            <person name="Chillingworth T."/>
            <person name="Churcher C.M."/>
            <person name="Collins M."/>
            <person name="Connor R."/>
            <person name="Cronin A."/>
            <person name="Davis P."/>
            <person name="Feltwell T."/>
            <person name="Fraser A."/>
            <person name="Gentles S."/>
            <person name="Goble A."/>
            <person name="Hamlin N."/>
            <person name="Harris D.E."/>
            <person name="Hidalgo J."/>
            <person name="Hodgson G."/>
            <person name="Holroyd S."/>
            <person name="Hornsby T."/>
            <person name="Howarth S."/>
            <person name="Huckle E.J."/>
            <person name="Hunt S."/>
            <person name="Jagels K."/>
            <person name="James K.D."/>
            <person name="Jones L."/>
            <person name="Jones M."/>
            <person name="Leather S."/>
            <person name="McDonald S."/>
            <person name="McLean J."/>
            <person name="Mooney P."/>
            <person name="Moule S."/>
            <person name="Mungall K.L."/>
            <person name="Murphy L.D."/>
            <person name="Niblett D."/>
            <person name="Odell C."/>
            <person name="Oliver K."/>
            <person name="O'Neil S."/>
            <person name="Pearson D."/>
            <person name="Quail M.A."/>
            <person name="Rabbinowitsch E."/>
            <person name="Rutherford K.M."/>
            <person name="Rutter S."/>
            <person name="Saunders D."/>
            <person name="Seeger K."/>
            <person name="Sharp S."/>
            <person name="Skelton J."/>
            <person name="Simmonds M.N."/>
            <person name="Squares R."/>
            <person name="Squares S."/>
            <person name="Stevens K."/>
            <person name="Taylor K."/>
            <person name="Taylor R.G."/>
            <person name="Tivey A."/>
            <person name="Walsh S.V."/>
            <person name="Warren T."/>
            <person name="Whitehead S."/>
            <person name="Woodward J.R."/>
            <person name="Volckaert G."/>
            <person name="Aert R."/>
            <person name="Robben J."/>
            <person name="Grymonprez B."/>
            <person name="Weltjens I."/>
            <person name="Vanstreels E."/>
            <person name="Rieger M."/>
            <person name="Schaefer M."/>
            <person name="Mueller-Auer S."/>
            <person name="Gabel C."/>
            <person name="Fuchs M."/>
            <person name="Duesterhoeft A."/>
            <person name="Fritzc C."/>
            <person name="Holzer E."/>
            <person name="Moestl D."/>
            <person name="Hilbert H."/>
            <person name="Borzym K."/>
            <person name="Langer I."/>
            <person name="Beck A."/>
            <person name="Lehrach H."/>
            <person name="Reinhardt R."/>
            <person name="Pohl T.M."/>
            <person name="Eger P."/>
            <person name="Zimmermann W."/>
            <person name="Wedler H."/>
            <person name="Wambutt R."/>
            <person name="Purnelle B."/>
            <person name="Goffeau A."/>
            <person name="Cadieu E."/>
            <person name="Dreano S."/>
            <person name="Gloux S."/>
            <person name="Lelaure V."/>
            <person name="Mottier S."/>
            <person name="Galibert F."/>
            <person name="Aves S.J."/>
            <person name="Xiang Z."/>
            <person name="Hunt C."/>
            <person name="Moore K."/>
            <person name="Hurst S.M."/>
            <person name="Lucas M."/>
            <person name="Rochet M."/>
            <person name="Gaillardin C."/>
            <person name="Tallada V.A."/>
            <person name="Garzon A."/>
            <person name="Thode G."/>
            <person name="Daga R.R."/>
            <person name="Cruzado L."/>
            <person name="Jimenez J."/>
            <person name="Sanchez M."/>
            <person name="del Rey F."/>
            <person name="Benito J."/>
            <person name="Dominguez A."/>
            <person name="Revuelta J.L."/>
            <person name="Moreno S."/>
            <person name="Armstrong J."/>
            <person name="Forsburg S.L."/>
            <person name="Cerutti L."/>
            <person name="Lowe T."/>
            <person name="McCombie W.R."/>
            <person name="Paulsen I."/>
            <person name="Potashkin J."/>
            <person name="Shpakovski G.V."/>
            <person name="Ussery D."/>
            <person name="Barrell B.G."/>
            <person name="Nurse P."/>
        </authorList>
    </citation>
    <scope>NUCLEOTIDE SEQUENCE [LARGE SCALE GENOMIC DNA]</scope>
    <source>
        <strain>972 / ATCC 24843</strain>
    </source>
</reference>
<protein>
    <recommendedName>
        <fullName>Uncharacterized WD repeat-containing protein C13G6.08</fullName>
    </recommendedName>
</protein>
<accession>Q09786</accession>
<name>YA98_SCHPO</name>
<sequence>MSTLYQVNKIKEILIRFLETIIINGMNSFSSTVYGQNAERSNTPTLIDPSNKETANVCPISKNLFQSYPKGSYRNSQRLTSRNGLDRFIPMTSNKDTISLGRHSSLSRNLVNKTKNASETYQQLLEYALEVERDDNVFTYAKLQKSDMTQKCPTMVASEKDNKGKLNEKKNRSPENLLPFRILDAPELRDDFYTSLLSWSPKGDLAIGLAENIYLWSKELGPTRVLEESIYDVSSVAYSYNGDILAVGRVDGTLQFWQDNERVPRISIHHPGDIGVLAWKPVLETNRLLVGKGNGNIFVYDIIWSESTSKAVLVATITNAHDEQVCGLTWNHDGSQFASGGNDNRVCLFKGSDLRQPLYVWQQNAAVKALSFCPWQRSLLATGAGSHDKHIRFYNCFNGKKIDELYCGAQITSIHWSPKYREFSVTFGYSLETVQHRFAVYSWPQLECLVSVLPSVPDIRCVHSVLTSQLNETTGRCEMTDSIIIASSNETIKFFDLSEESSWHNSRVLTWHGIFDSQILEMLEGIDGKIDSHLR</sequence>